<name>MIAB_MYCSK</name>
<dbReference type="EC" id="2.8.4.3" evidence="1"/>
<dbReference type="EMBL" id="CP000518">
    <property type="protein sequence ID" value="ABL91401.1"/>
    <property type="molecule type" value="Genomic_DNA"/>
</dbReference>
<dbReference type="SMR" id="A1UEZ3"/>
<dbReference type="STRING" id="189918.Mkms_2203"/>
<dbReference type="KEGG" id="mkm:Mkms_2203"/>
<dbReference type="HOGENOM" id="CLU_018697_2_2_11"/>
<dbReference type="GO" id="GO:0005829">
    <property type="term" value="C:cytosol"/>
    <property type="evidence" value="ECO:0007669"/>
    <property type="project" value="TreeGrafter"/>
</dbReference>
<dbReference type="GO" id="GO:0051539">
    <property type="term" value="F:4 iron, 4 sulfur cluster binding"/>
    <property type="evidence" value="ECO:0007669"/>
    <property type="project" value="UniProtKB-UniRule"/>
</dbReference>
<dbReference type="GO" id="GO:0046872">
    <property type="term" value="F:metal ion binding"/>
    <property type="evidence" value="ECO:0007669"/>
    <property type="project" value="UniProtKB-KW"/>
</dbReference>
<dbReference type="GO" id="GO:0035597">
    <property type="term" value="F:N6-isopentenyladenosine methylthiotransferase activity"/>
    <property type="evidence" value="ECO:0007669"/>
    <property type="project" value="TreeGrafter"/>
</dbReference>
<dbReference type="CDD" id="cd01335">
    <property type="entry name" value="Radical_SAM"/>
    <property type="match status" value="1"/>
</dbReference>
<dbReference type="FunFam" id="3.40.50.12160:FF:000008">
    <property type="entry name" value="tRNA-2-methylthio-N(6)-dimethylallyladenosine synthase"/>
    <property type="match status" value="1"/>
</dbReference>
<dbReference type="FunFam" id="3.80.30.20:FF:000001">
    <property type="entry name" value="tRNA-2-methylthio-N(6)-dimethylallyladenosine synthase 2"/>
    <property type="match status" value="1"/>
</dbReference>
<dbReference type="Gene3D" id="3.40.50.12160">
    <property type="entry name" value="Methylthiotransferase, N-terminal domain"/>
    <property type="match status" value="1"/>
</dbReference>
<dbReference type="Gene3D" id="3.80.30.20">
    <property type="entry name" value="tm_1862 like domain"/>
    <property type="match status" value="1"/>
</dbReference>
<dbReference type="HAMAP" id="MF_01864">
    <property type="entry name" value="tRNA_metthiotr_MiaB"/>
    <property type="match status" value="1"/>
</dbReference>
<dbReference type="InterPro" id="IPR006638">
    <property type="entry name" value="Elp3/MiaA/NifB-like_rSAM"/>
</dbReference>
<dbReference type="InterPro" id="IPR005839">
    <property type="entry name" value="Methylthiotransferase"/>
</dbReference>
<dbReference type="InterPro" id="IPR020612">
    <property type="entry name" value="Methylthiotransferase_CS"/>
</dbReference>
<dbReference type="InterPro" id="IPR013848">
    <property type="entry name" value="Methylthiotransferase_N"/>
</dbReference>
<dbReference type="InterPro" id="IPR038135">
    <property type="entry name" value="Methylthiotransferase_N_sf"/>
</dbReference>
<dbReference type="InterPro" id="IPR006463">
    <property type="entry name" value="MiaB_methiolase"/>
</dbReference>
<dbReference type="InterPro" id="IPR007197">
    <property type="entry name" value="rSAM"/>
</dbReference>
<dbReference type="InterPro" id="IPR023404">
    <property type="entry name" value="rSAM_horseshoe"/>
</dbReference>
<dbReference type="InterPro" id="IPR002792">
    <property type="entry name" value="TRAM_dom"/>
</dbReference>
<dbReference type="NCBIfam" id="TIGR01574">
    <property type="entry name" value="miaB-methiolase"/>
    <property type="match status" value="1"/>
</dbReference>
<dbReference type="NCBIfam" id="TIGR00089">
    <property type="entry name" value="MiaB/RimO family radical SAM methylthiotransferase"/>
    <property type="match status" value="1"/>
</dbReference>
<dbReference type="PANTHER" id="PTHR43020">
    <property type="entry name" value="CDK5 REGULATORY SUBUNIT-ASSOCIATED PROTEIN 1"/>
    <property type="match status" value="1"/>
</dbReference>
<dbReference type="PANTHER" id="PTHR43020:SF2">
    <property type="entry name" value="MITOCHONDRIAL TRNA METHYLTHIOTRANSFERASE CDK5RAP1"/>
    <property type="match status" value="1"/>
</dbReference>
<dbReference type="Pfam" id="PF04055">
    <property type="entry name" value="Radical_SAM"/>
    <property type="match status" value="1"/>
</dbReference>
<dbReference type="Pfam" id="PF00919">
    <property type="entry name" value="UPF0004"/>
    <property type="match status" value="1"/>
</dbReference>
<dbReference type="SFLD" id="SFLDF00273">
    <property type="entry name" value="(dimethylallyl)adenosine_tRNA"/>
    <property type="match status" value="1"/>
</dbReference>
<dbReference type="SFLD" id="SFLDG01082">
    <property type="entry name" value="B12-binding_domain_containing"/>
    <property type="match status" value="1"/>
</dbReference>
<dbReference type="SFLD" id="SFLDS00029">
    <property type="entry name" value="Radical_SAM"/>
    <property type="match status" value="1"/>
</dbReference>
<dbReference type="SMART" id="SM00729">
    <property type="entry name" value="Elp3"/>
    <property type="match status" value="1"/>
</dbReference>
<dbReference type="SUPFAM" id="SSF102114">
    <property type="entry name" value="Radical SAM enzymes"/>
    <property type="match status" value="1"/>
</dbReference>
<dbReference type="PROSITE" id="PS51449">
    <property type="entry name" value="MTTASE_N"/>
    <property type="match status" value="1"/>
</dbReference>
<dbReference type="PROSITE" id="PS01278">
    <property type="entry name" value="MTTASE_RADICAL"/>
    <property type="match status" value="1"/>
</dbReference>
<dbReference type="PROSITE" id="PS51918">
    <property type="entry name" value="RADICAL_SAM"/>
    <property type="match status" value="1"/>
</dbReference>
<dbReference type="PROSITE" id="PS50926">
    <property type="entry name" value="TRAM"/>
    <property type="match status" value="1"/>
</dbReference>
<reference key="1">
    <citation type="submission" date="2006-12" db="EMBL/GenBank/DDBJ databases">
        <title>Complete sequence of chromosome of Mycobacterium sp. KMS.</title>
        <authorList>
            <consortium name="US DOE Joint Genome Institute"/>
            <person name="Copeland A."/>
            <person name="Lucas S."/>
            <person name="Lapidus A."/>
            <person name="Barry K."/>
            <person name="Detter J.C."/>
            <person name="Glavina del Rio T."/>
            <person name="Hammon N."/>
            <person name="Israni S."/>
            <person name="Dalin E."/>
            <person name="Tice H."/>
            <person name="Pitluck S."/>
            <person name="Kiss H."/>
            <person name="Brettin T."/>
            <person name="Bruce D."/>
            <person name="Han C."/>
            <person name="Tapia R."/>
            <person name="Gilna P."/>
            <person name="Schmutz J."/>
            <person name="Larimer F."/>
            <person name="Land M."/>
            <person name="Hauser L."/>
            <person name="Kyrpides N."/>
            <person name="Mikhailova N."/>
            <person name="Miller C.D."/>
            <person name="Richardson P."/>
        </authorList>
    </citation>
    <scope>NUCLEOTIDE SEQUENCE [LARGE SCALE GENOMIC DNA]</scope>
    <source>
        <strain>KMS</strain>
    </source>
</reference>
<evidence type="ECO:0000255" key="1">
    <source>
        <dbReference type="HAMAP-Rule" id="MF_01864"/>
    </source>
</evidence>
<evidence type="ECO:0000255" key="2">
    <source>
        <dbReference type="PROSITE-ProRule" id="PRU01266"/>
    </source>
</evidence>
<sequence>MTSTVTQQAANALPPVARTYQVRTYGCQMNVHDSERLAGLLEDAGYRRAADGADADVVVFNTCAVRENADNKLYGNLSHLAPRKRSEPQMQIAVGGCLAQKDRDAVLRRAPWVDVVFGTHNIGSLPTLLERARHNRAAQVEIAEALQEFPSTLPAARESAYAGWVSISVGCNNTCTFCIVPSLRGKEVDRRPGDVLAEIQTLVDQGVLEVTLLGQNVNAYGVSFAADERLREDPRMWQSVPRNRGAFAELLRACGRIDGLERVRFTSPHPAEFTDDVIEAMAETPNVCPALHMPLQSGSDRILRAMRRSYRAEKYLGIIDRVRAAIPDAAITTDLIVGFPGETEEDFQATLDVVAASRFSSAFTFQYSKRPGTPAADMPGQLPKAVVSERYQRLIELQERISLEENQAQVGRTLELLVATGEGRKDAATARLSGRARDGRLVHFAPGAAADEPLARRAFDQVRPGDVVTTTVTGAAPHHLIADGALLTHRRTRAGDAHAAGLRPRTGVGLGIPGVGAPAPAPVTTGCAL</sequence>
<protein>
    <recommendedName>
        <fullName evidence="1">tRNA-2-methylthio-N(6)-dimethylallyladenosine synthase</fullName>
        <ecNumber evidence="1">2.8.4.3</ecNumber>
    </recommendedName>
    <alternativeName>
        <fullName evidence="1">(Dimethylallyl)adenosine tRNA methylthiotransferase MiaB</fullName>
    </alternativeName>
    <alternativeName>
        <fullName evidence="1">tRNA-i(6)A37 methylthiotransferase</fullName>
    </alternativeName>
</protein>
<organism>
    <name type="scientific">Mycobacterium sp. (strain KMS)</name>
    <dbReference type="NCBI Taxonomy" id="189918"/>
    <lineage>
        <taxon>Bacteria</taxon>
        <taxon>Bacillati</taxon>
        <taxon>Actinomycetota</taxon>
        <taxon>Actinomycetes</taxon>
        <taxon>Mycobacteriales</taxon>
        <taxon>Mycobacteriaceae</taxon>
        <taxon>Mycobacterium</taxon>
    </lineage>
</organism>
<feature type="chain" id="PRO_0000374392" description="tRNA-2-methylthio-N(6)-dimethylallyladenosine synthase">
    <location>
        <begin position="1"/>
        <end position="529"/>
    </location>
</feature>
<feature type="domain" description="MTTase N-terminal" evidence="1">
    <location>
        <begin position="18"/>
        <end position="134"/>
    </location>
</feature>
<feature type="domain" description="Radical SAM core" evidence="2">
    <location>
        <begin position="157"/>
        <end position="404"/>
    </location>
</feature>
<feature type="domain" description="TRAM" evidence="1">
    <location>
        <begin position="407"/>
        <end position="486"/>
    </location>
</feature>
<feature type="binding site" evidence="1">
    <location>
        <position position="27"/>
    </location>
    <ligand>
        <name>[4Fe-4S] cluster</name>
        <dbReference type="ChEBI" id="CHEBI:49883"/>
        <label>1</label>
    </ligand>
</feature>
<feature type="binding site" evidence="1">
    <location>
        <position position="63"/>
    </location>
    <ligand>
        <name>[4Fe-4S] cluster</name>
        <dbReference type="ChEBI" id="CHEBI:49883"/>
        <label>1</label>
    </ligand>
</feature>
<feature type="binding site" evidence="1">
    <location>
        <position position="97"/>
    </location>
    <ligand>
        <name>[4Fe-4S] cluster</name>
        <dbReference type="ChEBI" id="CHEBI:49883"/>
        <label>1</label>
    </ligand>
</feature>
<feature type="binding site" evidence="1">
    <location>
        <position position="171"/>
    </location>
    <ligand>
        <name>[4Fe-4S] cluster</name>
        <dbReference type="ChEBI" id="CHEBI:49883"/>
        <label>2</label>
        <note>4Fe-4S-S-AdoMet</note>
    </ligand>
</feature>
<feature type="binding site" evidence="1">
    <location>
        <position position="175"/>
    </location>
    <ligand>
        <name>[4Fe-4S] cluster</name>
        <dbReference type="ChEBI" id="CHEBI:49883"/>
        <label>2</label>
        <note>4Fe-4S-S-AdoMet</note>
    </ligand>
</feature>
<feature type="binding site" evidence="1">
    <location>
        <position position="178"/>
    </location>
    <ligand>
        <name>[4Fe-4S] cluster</name>
        <dbReference type="ChEBI" id="CHEBI:49883"/>
        <label>2</label>
        <note>4Fe-4S-S-AdoMet</note>
    </ligand>
</feature>
<accession>A1UEZ3</accession>
<gene>
    <name evidence="1" type="primary">miaB</name>
    <name type="ordered locus">Mkms_2203</name>
</gene>
<keyword id="KW-0004">4Fe-4S</keyword>
<keyword id="KW-0963">Cytoplasm</keyword>
<keyword id="KW-0408">Iron</keyword>
<keyword id="KW-0411">Iron-sulfur</keyword>
<keyword id="KW-0479">Metal-binding</keyword>
<keyword id="KW-0949">S-adenosyl-L-methionine</keyword>
<keyword id="KW-0808">Transferase</keyword>
<keyword id="KW-0819">tRNA processing</keyword>
<proteinExistence type="inferred from homology"/>
<comment type="function">
    <text evidence="1">Catalyzes the methylthiolation of N6-(dimethylallyl)adenosine (i(6)A), leading to the formation of 2-methylthio-N6-(dimethylallyl)adenosine (ms(2)i(6)A) at position 37 in tRNAs that read codons beginning with uridine.</text>
</comment>
<comment type="catalytic activity">
    <reaction evidence="1">
        <text>N(6)-dimethylallyladenosine(37) in tRNA + (sulfur carrier)-SH + AH2 + 2 S-adenosyl-L-methionine = 2-methylsulfanyl-N(6)-dimethylallyladenosine(37) in tRNA + (sulfur carrier)-H + 5'-deoxyadenosine + L-methionine + A + S-adenosyl-L-homocysteine + 2 H(+)</text>
        <dbReference type="Rhea" id="RHEA:37067"/>
        <dbReference type="Rhea" id="RHEA-COMP:10375"/>
        <dbReference type="Rhea" id="RHEA-COMP:10376"/>
        <dbReference type="Rhea" id="RHEA-COMP:14737"/>
        <dbReference type="Rhea" id="RHEA-COMP:14739"/>
        <dbReference type="ChEBI" id="CHEBI:13193"/>
        <dbReference type="ChEBI" id="CHEBI:15378"/>
        <dbReference type="ChEBI" id="CHEBI:17319"/>
        <dbReference type="ChEBI" id="CHEBI:17499"/>
        <dbReference type="ChEBI" id="CHEBI:29917"/>
        <dbReference type="ChEBI" id="CHEBI:57844"/>
        <dbReference type="ChEBI" id="CHEBI:57856"/>
        <dbReference type="ChEBI" id="CHEBI:59789"/>
        <dbReference type="ChEBI" id="CHEBI:64428"/>
        <dbReference type="ChEBI" id="CHEBI:74415"/>
        <dbReference type="ChEBI" id="CHEBI:74417"/>
        <dbReference type="EC" id="2.8.4.3"/>
    </reaction>
</comment>
<comment type="cofactor">
    <cofactor evidence="1">
        <name>[4Fe-4S] cluster</name>
        <dbReference type="ChEBI" id="CHEBI:49883"/>
    </cofactor>
    <text evidence="1">Binds 2 [4Fe-4S] clusters. One cluster is coordinated with 3 cysteines and an exchangeable S-adenosyl-L-methionine.</text>
</comment>
<comment type="subunit">
    <text evidence="1">Monomer.</text>
</comment>
<comment type="subcellular location">
    <subcellularLocation>
        <location evidence="1">Cytoplasm</location>
    </subcellularLocation>
</comment>
<comment type="similarity">
    <text evidence="1">Belongs to the methylthiotransferase family. MiaB subfamily.</text>
</comment>